<proteinExistence type="inferred from homology"/>
<evidence type="ECO:0000305" key="1"/>
<comment type="subcellular location">
    <subcellularLocation>
        <location>Plastid</location>
        <location>Chloroplast</location>
    </subcellularLocation>
</comment>
<comment type="similarity">
    <text evidence="1">Belongs to the universal ribosomal protein uS2 family.</text>
</comment>
<sequence length="236" mass="26427">MGRRYWNINLEEMMEAGIHFGHVTNKWNPRMAPYISSKRKGIHITNLTITARFLSEACDLVFDAASRGKRFLIVGTKKKAADLVASAAIKARCHYVNKKWLGGMLTNWSTTETRLQKFRDLRAEQKMGKLNRLPKGDAAMLKRKLSTLQAYLGGIKYMTGLPDIVIIVDQQEEYTVLRECVILGIPTICLIDTNCDPDLADISIPANDDAIASIRLILTKLVSAICEGHSSYIKKG</sequence>
<accession>Q3BAQ3</accession>
<keyword id="KW-0150">Chloroplast</keyword>
<keyword id="KW-0934">Plastid</keyword>
<keyword id="KW-0687">Ribonucleoprotein</keyword>
<keyword id="KW-0689">Ribosomal protein</keyword>
<organism>
    <name type="scientific">Phalaenopsis aphrodite subsp. formosana</name>
    <name type="common">Moth orchid</name>
    <dbReference type="NCBI Taxonomy" id="308872"/>
    <lineage>
        <taxon>Eukaryota</taxon>
        <taxon>Viridiplantae</taxon>
        <taxon>Streptophyta</taxon>
        <taxon>Embryophyta</taxon>
        <taxon>Tracheophyta</taxon>
        <taxon>Spermatophyta</taxon>
        <taxon>Magnoliopsida</taxon>
        <taxon>Liliopsida</taxon>
        <taxon>Asparagales</taxon>
        <taxon>Orchidaceae</taxon>
        <taxon>Epidendroideae</taxon>
        <taxon>Vandeae</taxon>
        <taxon>Aeridinae</taxon>
        <taxon>Phalaenopsis</taxon>
    </lineage>
</organism>
<geneLocation type="chloroplast"/>
<feature type="chain" id="PRO_0000352147" description="Small ribosomal subunit protein uS2c">
    <location>
        <begin position="1"/>
        <end position="236"/>
    </location>
</feature>
<dbReference type="EMBL" id="AY916449">
    <property type="protein sequence ID" value="AAW82492.1"/>
    <property type="molecule type" value="Genomic_DNA"/>
</dbReference>
<dbReference type="RefSeq" id="YP_358565.1">
    <property type="nucleotide sequence ID" value="NC_007499.1"/>
</dbReference>
<dbReference type="SMR" id="Q3BAQ3"/>
<dbReference type="GeneID" id="3741667"/>
<dbReference type="GO" id="GO:0009507">
    <property type="term" value="C:chloroplast"/>
    <property type="evidence" value="ECO:0007669"/>
    <property type="project" value="UniProtKB-SubCell"/>
</dbReference>
<dbReference type="GO" id="GO:0005763">
    <property type="term" value="C:mitochondrial small ribosomal subunit"/>
    <property type="evidence" value="ECO:0007669"/>
    <property type="project" value="TreeGrafter"/>
</dbReference>
<dbReference type="GO" id="GO:0003735">
    <property type="term" value="F:structural constituent of ribosome"/>
    <property type="evidence" value="ECO:0007669"/>
    <property type="project" value="InterPro"/>
</dbReference>
<dbReference type="GO" id="GO:0006412">
    <property type="term" value="P:translation"/>
    <property type="evidence" value="ECO:0007669"/>
    <property type="project" value="UniProtKB-UniRule"/>
</dbReference>
<dbReference type="CDD" id="cd01425">
    <property type="entry name" value="RPS2"/>
    <property type="match status" value="1"/>
</dbReference>
<dbReference type="FunFam" id="3.40.50.10490:FF:000101">
    <property type="match status" value="1"/>
</dbReference>
<dbReference type="FunFam" id="1.10.287.610:FF:000001">
    <property type="entry name" value="30S ribosomal protein S2"/>
    <property type="match status" value="1"/>
</dbReference>
<dbReference type="Gene3D" id="3.40.50.10490">
    <property type="entry name" value="Glucose-6-phosphate isomerase like protein, domain 1"/>
    <property type="match status" value="1"/>
</dbReference>
<dbReference type="Gene3D" id="1.10.287.610">
    <property type="entry name" value="Helix hairpin bin"/>
    <property type="match status" value="1"/>
</dbReference>
<dbReference type="HAMAP" id="MF_00291_B">
    <property type="entry name" value="Ribosomal_uS2_B"/>
    <property type="match status" value="1"/>
</dbReference>
<dbReference type="InterPro" id="IPR001865">
    <property type="entry name" value="Ribosomal_uS2"/>
</dbReference>
<dbReference type="InterPro" id="IPR005706">
    <property type="entry name" value="Ribosomal_uS2_bac/mit/plastid"/>
</dbReference>
<dbReference type="InterPro" id="IPR018130">
    <property type="entry name" value="Ribosomal_uS2_CS"/>
</dbReference>
<dbReference type="InterPro" id="IPR023591">
    <property type="entry name" value="Ribosomal_uS2_flav_dom_sf"/>
</dbReference>
<dbReference type="NCBIfam" id="TIGR01011">
    <property type="entry name" value="rpsB_bact"/>
    <property type="match status" value="1"/>
</dbReference>
<dbReference type="PANTHER" id="PTHR12534">
    <property type="entry name" value="30S RIBOSOMAL PROTEIN S2 PROKARYOTIC AND ORGANELLAR"/>
    <property type="match status" value="1"/>
</dbReference>
<dbReference type="PANTHER" id="PTHR12534:SF0">
    <property type="entry name" value="SMALL RIBOSOMAL SUBUNIT PROTEIN US2M"/>
    <property type="match status" value="1"/>
</dbReference>
<dbReference type="Pfam" id="PF00318">
    <property type="entry name" value="Ribosomal_S2"/>
    <property type="match status" value="1"/>
</dbReference>
<dbReference type="PRINTS" id="PR00395">
    <property type="entry name" value="RIBOSOMALS2"/>
</dbReference>
<dbReference type="SUPFAM" id="SSF52313">
    <property type="entry name" value="Ribosomal protein S2"/>
    <property type="match status" value="1"/>
</dbReference>
<dbReference type="PROSITE" id="PS00963">
    <property type="entry name" value="RIBOSOMAL_S2_2"/>
    <property type="match status" value="1"/>
</dbReference>
<protein>
    <recommendedName>
        <fullName evidence="1">Small ribosomal subunit protein uS2c</fullName>
    </recommendedName>
    <alternativeName>
        <fullName>30S ribosomal protein S2, chloroplastic</fullName>
    </alternativeName>
</protein>
<name>RR2_PHAAO</name>
<gene>
    <name type="primary">rps2</name>
</gene>
<reference key="1">
    <citation type="journal article" date="2006" name="Mol. Biol. Evol.">
        <title>The chloroplast genome of Phalaenopsis aphrodite (Orchidaceae): comparative analysis of evolutionary rate with that of grasses and its phylogenetic implications.</title>
        <authorList>
            <person name="Chang C.-C."/>
            <person name="Lin H.-C."/>
            <person name="Lin I.-P."/>
            <person name="Chow T.-Y."/>
            <person name="Chen H.-H."/>
            <person name="Chen W.-H."/>
            <person name="Cheng C.-H."/>
            <person name="Lin C.-Y."/>
            <person name="Liu S.-M."/>
            <person name="Chang C.-C."/>
            <person name="Chaw S.-M."/>
        </authorList>
    </citation>
    <scope>NUCLEOTIDE SEQUENCE [LARGE SCALE GENOMIC DNA]</scope>
    <source>
        <strain>cv. Taisugar TS-97</strain>
    </source>
</reference>